<evidence type="ECO:0000250" key="1">
    <source>
        <dbReference type="UniProtKB" id="P02086"/>
    </source>
</evidence>
<evidence type="ECO:0000250" key="2">
    <source>
        <dbReference type="UniProtKB" id="P68871"/>
    </source>
</evidence>
<evidence type="ECO:0000255" key="3">
    <source>
        <dbReference type="PROSITE-ProRule" id="PRU00238"/>
    </source>
</evidence>
<evidence type="ECO:0000269" key="4">
    <source>
    </source>
</evidence>
<organism>
    <name type="scientific">Macaca fuscata fuscata</name>
    <name type="common">Japanese macaque</name>
    <dbReference type="NCBI Taxonomy" id="9543"/>
    <lineage>
        <taxon>Eukaryota</taxon>
        <taxon>Metazoa</taxon>
        <taxon>Chordata</taxon>
        <taxon>Craniata</taxon>
        <taxon>Vertebrata</taxon>
        <taxon>Euteleostomi</taxon>
        <taxon>Mammalia</taxon>
        <taxon>Eutheria</taxon>
        <taxon>Euarchontoglires</taxon>
        <taxon>Primates</taxon>
        <taxon>Haplorrhini</taxon>
        <taxon>Catarrhini</taxon>
        <taxon>Cercopithecidae</taxon>
        <taxon>Cercopithecinae</taxon>
        <taxon>Macaca</taxon>
    </lineage>
</organism>
<gene>
    <name type="primary">HBB</name>
</gene>
<protein>
    <recommendedName>
        <fullName>Hemoglobin subunit beta</fullName>
    </recommendedName>
    <alternativeName>
        <fullName>Beta-globin</fullName>
    </alternativeName>
    <alternativeName>
        <fullName>Hemoglobin beta chain</fullName>
    </alternativeName>
</protein>
<comment type="function">
    <text>Involved in oxygen transport from the lung to the various peripheral tissues.</text>
</comment>
<comment type="subunit">
    <text>Heterotetramer of two alpha chains and two beta chains.</text>
</comment>
<comment type="tissue specificity">
    <text>Red blood cells.</text>
</comment>
<comment type="similarity">
    <text evidence="3">Belongs to the globin family.</text>
</comment>
<proteinExistence type="evidence at protein level"/>
<keyword id="KW-0007">Acetylation</keyword>
<keyword id="KW-0903">Direct protein sequencing</keyword>
<keyword id="KW-0349">Heme</keyword>
<keyword id="KW-0408">Iron</keyword>
<keyword id="KW-0479">Metal-binding</keyword>
<keyword id="KW-0561">Oxygen transport</keyword>
<keyword id="KW-0597">Phosphoprotein</keyword>
<keyword id="KW-0702">S-nitrosylation</keyword>
<keyword id="KW-0813">Transport</keyword>
<dbReference type="PIR" id="A04622">
    <property type="entry name" value="HBMQJ"/>
</dbReference>
<dbReference type="SMR" id="P68222"/>
<dbReference type="GO" id="GO:0072562">
    <property type="term" value="C:blood microparticle"/>
    <property type="evidence" value="ECO:0007669"/>
    <property type="project" value="TreeGrafter"/>
</dbReference>
<dbReference type="GO" id="GO:0031838">
    <property type="term" value="C:haptoglobin-hemoglobin complex"/>
    <property type="evidence" value="ECO:0007669"/>
    <property type="project" value="TreeGrafter"/>
</dbReference>
<dbReference type="GO" id="GO:0005833">
    <property type="term" value="C:hemoglobin complex"/>
    <property type="evidence" value="ECO:0007669"/>
    <property type="project" value="InterPro"/>
</dbReference>
<dbReference type="GO" id="GO:0031720">
    <property type="term" value="F:haptoglobin binding"/>
    <property type="evidence" value="ECO:0007669"/>
    <property type="project" value="TreeGrafter"/>
</dbReference>
<dbReference type="GO" id="GO:0020037">
    <property type="term" value="F:heme binding"/>
    <property type="evidence" value="ECO:0007669"/>
    <property type="project" value="InterPro"/>
</dbReference>
<dbReference type="GO" id="GO:0031721">
    <property type="term" value="F:hemoglobin alpha binding"/>
    <property type="evidence" value="ECO:0007669"/>
    <property type="project" value="TreeGrafter"/>
</dbReference>
<dbReference type="GO" id="GO:0046872">
    <property type="term" value="F:metal ion binding"/>
    <property type="evidence" value="ECO:0007669"/>
    <property type="project" value="UniProtKB-KW"/>
</dbReference>
<dbReference type="GO" id="GO:0043177">
    <property type="term" value="F:organic acid binding"/>
    <property type="evidence" value="ECO:0007669"/>
    <property type="project" value="TreeGrafter"/>
</dbReference>
<dbReference type="GO" id="GO:0019825">
    <property type="term" value="F:oxygen binding"/>
    <property type="evidence" value="ECO:0007669"/>
    <property type="project" value="InterPro"/>
</dbReference>
<dbReference type="GO" id="GO:0005344">
    <property type="term" value="F:oxygen carrier activity"/>
    <property type="evidence" value="ECO:0007669"/>
    <property type="project" value="UniProtKB-KW"/>
</dbReference>
<dbReference type="GO" id="GO:0004601">
    <property type="term" value="F:peroxidase activity"/>
    <property type="evidence" value="ECO:0007669"/>
    <property type="project" value="TreeGrafter"/>
</dbReference>
<dbReference type="GO" id="GO:0042744">
    <property type="term" value="P:hydrogen peroxide catabolic process"/>
    <property type="evidence" value="ECO:0007669"/>
    <property type="project" value="TreeGrafter"/>
</dbReference>
<dbReference type="CDD" id="cd08925">
    <property type="entry name" value="Hb-beta-like"/>
    <property type="match status" value="1"/>
</dbReference>
<dbReference type="FunFam" id="1.10.490.10:FF:000001">
    <property type="entry name" value="Hemoglobin subunit beta"/>
    <property type="match status" value="1"/>
</dbReference>
<dbReference type="Gene3D" id="1.10.490.10">
    <property type="entry name" value="Globins"/>
    <property type="match status" value="1"/>
</dbReference>
<dbReference type="InterPro" id="IPR000971">
    <property type="entry name" value="Globin"/>
</dbReference>
<dbReference type="InterPro" id="IPR009050">
    <property type="entry name" value="Globin-like_sf"/>
</dbReference>
<dbReference type="InterPro" id="IPR012292">
    <property type="entry name" value="Globin/Proto"/>
</dbReference>
<dbReference type="InterPro" id="IPR002337">
    <property type="entry name" value="Hemoglobin_b"/>
</dbReference>
<dbReference type="InterPro" id="IPR050056">
    <property type="entry name" value="Hemoglobin_oxygen_transport"/>
</dbReference>
<dbReference type="PANTHER" id="PTHR11442">
    <property type="entry name" value="HEMOGLOBIN FAMILY MEMBER"/>
    <property type="match status" value="1"/>
</dbReference>
<dbReference type="PANTHER" id="PTHR11442:SF42">
    <property type="entry name" value="HEMOGLOBIN SUBUNIT BETA"/>
    <property type="match status" value="1"/>
</dbReference>
<dbReference type="Pfam" id="PF00042">
    <property type="entry name" value="Globin"/>
    <property type="match status" value="1"/>
</dbReference>
<dbReference type="PRINTS" id="PR00814">
    <property type="entry name" value="BETAHAEM"/>
</dbReference>
<dbReference type="SUPFAM" id="SSF46458">
    <property type="entry name" value="Globin-like"/>
    <property type="match status" value="1"/>
</dbReference>
<dbReference type="PROSITE" id="PS01033">
    <property type="entry name" value="GLOBIN"/>
    <property type="match status" value="1"/>
</dbReference>
<accession>P68222</accession>
<accession>P02027</accession>
<accession>Q9TSL4</accession>
<feature type="initiator methionine" description="Removed" evidence="1 4">
    <location>
        <position position="1"/>
    </location>
</feature>
<feature type="chain" id="PRO_0000053001" description="Hemoglobin subunit beta">
    <location>
        <begin position="2"/>
        <end position="147"/>
    </location>
</feature>
<feature type="domain" description="Globin" evidence="3">
    <location>
        <begin position="3"/>
        <end position="147"/>
    </location>
</feature>
<feature type="binding site" description="distal binding residue">
    <location>
        <position position="64"/>
    </location>
    <ligand>
        <name>heme b</name>
        <dbReference type="ChEBI" id="CHEBI:60344"/>
    </ligand>
    <ligandPart>
        <name>Fe</name>
        <dbReference type="ChEBI" id="CHEBI:18248"/>
    </ligandPart>
</feature>
<feature type="binding site" description="proximal binding residue">
    <location>
        <position position="93"/>
    </location>
    <ligand>
        <name>heme b</name>
        <dbReference type="ChEBI" id="CHEBI:60344"/>
    </ligand>
    <ligandPart>
        <name>Fe</name>
        <dbReference type="ChEBI" id="CHEBI:18248"/>
    </ligandPart>
</feature>
<feature type="modified residue" description="N-acetylvaline" evidence="1">
    <location>
        <position position="2"/>
    </location>
</feature>
<feature type="modified residue" description="Phosphothreonine" evidence="2">
    <location>
        <position position="13"/>
    </location>
</feature>
<feature type="modified residue" description="Phosphoserine" evidence="2">
    <location>
        <position position="45"/>
    </location>
</feature>
<feature type="modified residue" description="N6-acetyllysine" evidence="2">
    <location>
        <position position="60"/>
    </location>
</feature>
<feature type="modified residue" description="N6-acetyllysine" evidence="2">
    <location>
        <position position="83"/>
    </location>
</feature>
<feature type="modified residue" description="S-nitrosocysteine" evidence="2">
    <location>
        <position position="94"/>
    </location>
</feature>
<feature type="modified residue" description="N6-acetyllysine" evidence="2">
    <location>
        <position position="145"/>
    </location>
</feature>
<sequence length="147" mass="16114">MVHLTPEEKNAVTTLWGKVNVDEVGGEALGRLLVVYPWTQRFFESFGDLSSPDAVMGNPKVKAHGKKVLGAFSDGLNHLDNLKGTFAQLSELHCDKLHVDPENFKLLGNVLVCVLAHHFGKEFTPQVQAAYQKVVAGVANALAHKYH</sequence>
<reference key="1">
    <citation type="journal article" date="1971" name="Int. J. Protein Res.">
        <title>The primary structure of the beta-polypeptide chain of adult hemoglobin of the Japanese monkey (Macaca fuscata fuscata).</title>
        <authorList>
            <person name="Matsuda G."/>
            <person name="Maita T."/>
            <person name="Ota H."/>
            <person name="Tachikawa I."/>
            <person name="Tanaka Y."/>
            <person name="Araya A."/>
            <person name="Nakashima Y."/>
        </authorList>
    </citation>
    <scope>PROTEIN SEQUENCE OF 2-147</scope>
</reference>
<name>HBB_MACFU</name>